<name>Y686_METJA</name>
<organism>
    <name type="scientific">Methanocaldococcus jannaschii (strain ATCC 43067 / DSM 2661 / JAL-1 / JCM 10045 / NBRC 100440)</name>
    <name type="common">Methanococcus jannaschii</name>
    <dbReference type="NCBI Taxonomy" id="243232"/>
    <lineage>
        <taxon>Archaea</taxon>
        <taxon>Methanobacteriati</taxon>
        <taxon>Methanobacteriota</taxon>
        <taxon>Methanomada group</taxon>
        <taxon>Methanococci</taxon>
        <taxon>Methanococcales</taxon>
        <taxon>Methanocaldococcaceae</taxon>
        <taxon>Methanocaldococcus</taxon>
    </lineage>
</organism>
<accession>Q58099</accession>
<reference key="1">
    <citation type="journal article" date="1996" name="Science">
        <title>Complete genome sequence of the methanogenic archaeon, Methanococcus jannaschii.</title>
        <authorList>
            <person name="Bult C.J."/>
            <person name="White O."/>
            <person name="Olsen G.J."/>
            <person name="Zhou L."/>
            <person name="Fleischmann R.D."/>
            <person name="Sutton G.G."/>
            <person name="Blake J.A."/>
            <person name="FitzGerald L.M."/>
            <person name="Clayton R.A."/>
            <person name="Gocayne J.D."/>
            <person name="Kerlavage A.R."/>
            <person name="Dougherty B.A."/>
            <person name="Tomb J.-F."/>
            <person name="Adams M.D."/>
            <person name="Reich C.I."/>
            <person name="Overbeek R."/>
            <person name="Kirkness E.F."/>
            <person name="Weinstock K.G."/>
            <person name="Merrick J.M."/>
            <person name="Glodek A."/>
            <person name="Scott J.L."/>
            <person name="Geoghagen N.S.M."/>
            <person name="Weidman J.F."/>
            <person name="Fuhrmann J.L."/>
            <person name="Nguyen D."/>
            <person name="Utterback T.R."/>
            <person name="Kelley J.M."/>
            <person name="Peterson J.D."/>
            <person name="Sadow P.W."/>
            <person name="Hanna M.C."/>
            <person name="Cotton M.D."/>
            <person name="Roberts K.M."/>
            <person name="Hurst M.A."/>
            <person name="Kaine B.P."/>
            <person name="Borodovsky M."/>
            <person name="Klenk H.-P."/>
            <person name="Fraser C.M."/>
            <person name="Smith H.O."/>
            <person name="Woese C.R."/>
            <person name="Venter J.C."/>
        </authorList>
    </citation>
    <scope>NUCLEOTIDE SEQUENCE [LARGE SCALE GENOMIC DNA]</scope>
    <source>
        <strain>ATCC 43067 / DSM 2661 / JAL-1 / JCM 10045 / NBRC 100440</strain>
    </source>
</reference>
<sequence>MELSHDTKNLLDLVKKAYEGEVALPDFQRNFVWTRQDIEELIKSLLENMFIGTFLIQEINPENPPFGTIYIRGAEELNPNITLRKPRILVLDGQQRLTSLFYAIYSPNFPLKNTTKPYAFFIDLNKLVEDDIDNSVFSLSKDCRQYKALLNEDNSFDIEKLKEKRFFPLTFLSNSNKFYKIWYKHFSEIFPEEVFNYMHNILEYKVPTLILGLSYNDKPEQVVVLFERINKTGIKLSPYDLLVARFYKFIKLREKWAEAFENNIRIKNFAGDVEDTKVPYMFIQALALSKGMSIKSRDLIKIDNSILNDESWNRVVDIAENKVFQRIFDISEYGIADIKKWNPYTPTITMMLAFFLKHDIPDMDKVNKWYWSSVFSERYSGSTESKMMKDFKEVSQWIENNNKIPEVVENLKIEIQYGAYSLKKVKSSGSSKYKGVFNLIFKNKPMDFYKPDNIAYYKLEDHHIFPKGFLRNKGISNEYIDSVLNKTPILDETNKKISKKSPSKYVKEMIEIQKNKGLSEDEAVNKVKEILKGHFINEEMFEILRNTDDSLSKDEIEENFNRFIELREKLILEKILELIS</sequence>
<feature type="chain" id="PRO_0000106989" description="Uncharacterized protein MJ0686">
    <location>
        <begin position="1"/>
        <end position="580"/>
    </location>
</feature>
<keyword id="KW-1185">Reference proteome</keyword>
<proteinExistence type="predicted"/>
<gene>
    <name type="ordered locus">MJ0686</name>
</gene>
<dbReference type="EMBL" id="L77117">
    <property type="protein sequence ID" value="AAB98681.1"/>
    <property type="molecule type" value="Genomic_DNA"/>
</dbReference>
<dbReference type="PIR" id="F64385">
    <property type="entry name" value="F64385"/>
</dbReference>
<dbReference type="RefSeq" id="WP_010870191.1">
    <property type="nucleotide sequence ID" value="NC_000909.1"/>
</dbReference>
<dbReference type="SMR" id="Q58099"/>
<dbReference type="STRING" id="243232.MJ_0686"/>
<dbReference type="PaxDb" id="243232-MJ_0686"/>
<dbReference type="EnsemblBacteria" id="AAB98681">
    <property type="protein sequence ID" value="AAB98681"/>
    <property type="gene ID" value="MJ_0686"/>
</dbReference>
<dbReference type="GeneID" id="1451552"/>
<dbReference type="KEGG" id="mja:MJ_0686"/>
<dbReference type="eggNOG" id="arCOG05223">
    <property type="taxonomic scope" value="Archaea"/>
</dbReference>
<dbReference type="HOGENOM" id="CLU_021082_0_0_2"/>
<dbReference type="InParanoid" id="Q58099"/>
<dbReference type="OrthoDB" id="114325at2157"/>
<dbReference type="PhylomeDB" id="Q58099"/>
<dbReference type="Proteomes" id="UP000000805">
    <property type="component" value="Chromosome"/>
</dbReference>
<dbReference type="InterPro" id="IPR004919">
    <property type="entry name" value="GmrSD_N"/>
</dbReference>
<dbReference type="PANTHER" id="PTHR37292:SF2">
    <property type="entry name" value="DUF262 DOMAIN-CONTAINING PROTEIN"/>
    <property type="match status" value="1"/>
</dbReference>
<dbReference type="PANTHER" id="PTHR37292">
    <property type="entry name" value="VNG6097C"/>
    <property type="match status" value="1"/>
</dbReference>
<dbReference type="Pfam" id="PF03235">
    <property type="entry name" value="GmrSD_N"/>
    <property type="match status" value="1"/>
</dbReference>
<protein>
    <recommendedName>
        <fullName>Uncharacterized protein MJ0686</fullName>
    </recommendedName>
</protein>